<evidence type="ECO:0000250" key="1"/>
<evidence type="ECO:0000250" key="2">
    <source>
        <dbReference type="UniProtKB" id="P05019"/>
    </source>
</evidence>
<evidence type="ECO:0000256" key="3">
    <source>
        <dbReference type="SAM" id="MobiDB-lite"/>
    </source>
</evidence>
<evidence type="ECO:0000303" key="4">
    <source>
    </source>
</evidence>
<evidence type="ECO:0000305" key="5"/>
<dbReference type="EMBL" id="M95183">
    <property type="protein sequence ID" value="AAA49412.1"/>
    <property type="molecule type" value="mRNA"/>
</dbReference>
<dbReference type="PIR" id="A46244">
    <property type="entry name" value="A46244"/>
</dbReference>
<dbReference type="RefSeq" id="NP_001118168.1">
    <property type="nucleotide sequence ID" value="NM_001124696.1"/>
</dbReference>
<dbReference type="SMR" id="Q02815"/>
<dbReference type="Ensembl" id="ENSOMYT00000091213.2">
    <property type="protein sequence ID" value="ENSOMYP00000083744.1"/>
    <property type="gene ID" value="ENSOMYG00000038605.2"/>
</dbReference>
<dbReference type="GeneID" id="100136741"/>
<dbReference type="KEGG" id="omy:100136741"/>
<dbReference type="GeneTree" id="ENSGT00940000159081"/>
<dbReference type="OrthoDB" id="8936076at2759"/>
<dbReference type="SABIO-RK" id="Q02815"/>
<dbReference type="Proteomes" id="UP000694395">
    <property type="component" value="Chromosome 15"/>
</dbReference>
<dbReference type="GO" id="GO:0005615">
    <property type="term" value="C:extracellular space"/>
    <property type="evidence" value="ECO:0000314"/>
    <property type="project" value="AgBase"/>
</dbReference>
<dbReference type="GO" id="GO:0008083">
    <property type="term" value="F:growth factor activity"/>
    <property type="evidence" value="ECO:0007669"/>
    <property type="project" value="UniProtKB-KW"/>
</dbReference>
<dbReference type="GO" id="GO:0005179">
    <property type="term" value="F:hormone activity"/>
    <property type="evidence" value="ECO:0007669"/>
    <property type="project" value="InterPro"/>
</dbReference>
<dbReference type="GO" id="GO:0005159">
    <property type="term" value="F:insulin-like growth factor receptor binding"/>
    <property type="evidence" value="ECO:0000314"/>
    <property type="project" value="AgBase"/>
</dbReference>
<dbReference type="GO" id="GO:0008283">
    <property type="term" value="P:cell population proliferation"/>
    <property type="evidence" value="ECO:0007669"/>
    <property type="project" value="TreeGrafter"/>
</dbReference>
<dbReference type="GO" id="GO:0042538">
    <property type="term" value="P:hyperosmotic salinity response"/>
    <property type="evidence" value="ECO:0000314"/>
    <property type="project" value="AgBase"/>
</dbReference>
<dbReference type="GO" id="GO:0048009">
    <property type="term" value="P:insulin-like growth factor receptor signaling pathway"/>
    <property type="evidence" value="ECO:0007669"/>
    <property type="project" value="TreeGrafter"/>
</dbReference>
<dbReference type="GO" id="GO:0043066">
    <property type="term" value="P:negative regulation of apoptotic process"/>
    <property type="evidence" value="ECO:0000250"/>
    <property type="project" value="UniProtKB"/>
</dbReference>
<dbReference type="GO" id="GO:0090201">
    <property type="term" value="P:negative regulation of release of cytochrome c from mitochondria"/>
    <property type="evidence" value="ECO:0000250"/>
    <property type="project" value="UniProtKB"/>
</dbReference>
<dbReference type="GO" id="GO:0061036">
    <property type="term" value="P:positive regulation of cartilage development"/>
    <property type="evidence" value="ECO:0000314"/>
    <property type="project" value="AgBase"/>
</dbReference>
<dbReference type="GO" id="GO:0008284">
    <property type="term" value="P:positive regulation of cell population proliferation"/>
    <property type="evidence" value="ECO:0007669"/>
    <property type="project" value="TreeGrafter"/>
</dbReference>
<dbReference type="GO" id="GO:0051897">
    <property type="term" value="P:positive regulation of phosphatidylinositol 3-kinase/protein kinase B signal transduction"/>
    <property type="evidence" value="ECO:0007669"/>
    <property type="project" value="TreeGrafter"/>
</dbReference>
<dbReference type="GO" id="GO:0060416">
    <property type="term" value="P:response to growth hormone"/>
    <property type="evidence" value="ECO:0000314"/>
    <property type="project" value="AgBase"/>
</dbReference>
<dbReference type="CDD" id="cd04368">
    <property type="entry name" value="IlGF"/>
    <property type="match status" value="1"/>
</dbReference>
<dbReference type="FunFam" id="1.10.100.10:FF:000001">
    <property type="entry name" value="insulin-like growth factor I isoform X1"/>
    <property type="match status" value="1"/>
</dbReference>
<dbReference type="Gene3D" id="1.10.100.10">
    <property type="entry name" value="Insulin-like"/>
    <property type="match status" value="1"/>
</dbReference>
<dbReference type="InterPro" id="IPR022341">
    <property type="entry name" value="IGF-I"/>
</dbReference>
<dbReference type="InterPro" id="IPR016179">
    <property type="entry name" value="Insulin-like"/>
</dbReference>
<dbReference type="InterPro" id="IPR022350">
    <property type="entry name" value="Insulin-like_growth_factor"/>
</dbReference>
<dbReference type="InterPro" id="IPR036438">
    <property type="entry name" value="Insulin-like_sf"/>
</dbReference>
<dbReference type="InterPro" id="IPR022353">
    <property type="entry name" value="Insulin_CS"/>
</dbReference>
<dbReference type="InterPro" id="IPR022352">
    <property type="entry name" value="Insulin_family"/>
</dbReference>
<dbReference type="PANTHER" id="PTHR46845:SF3">
    <property type="entry name" value="INSULIN-LIKE GROWTH FACTOR 1"/>
    <property type="match status" value="1"/>
</dbReference>
<dbReference type="PANTHER" id="PTHR46845">
    <property type="entry name" value="INSULIN-LIKE GROWTH FACTOR I"/>
    <property type="match status" value="1"/>
</dbReference>
<dbReference type="Pfam" id="PF00049">
    <property type="entry name" value="Insulin"/>
    <property type="match status" value="1"/>
</dbReference>
<dbReference type="PRINTS" id="PR02002">
    <property type="entry name" value="INSLNLIKEGF"/>
</dbReference>
<dbReference type="PRINTS" id="PR02005">
    <property type="entry name" value="INSLNLIKEGF1"/>
</dbReference>
<dbReference type="PRINTS" id="PR00276">
    <property type="entry name" value="INSULINFAMLY"/>
</dbReference>
<dbReference type="SMART" id="SM00078">
    <property type="entry name" value="IlGF"/>
    <property type="match status" value="1"/>
</dbReference>
<dbReference type="SUPFAM" id="SSF56994">
    <property type="entry name" value="Insulin-like"/>
    <property type="match status" value="1"/>
</dbReference>
<dbReference type="PROSITE" id="PS00262">
    <property type="entry name" value="INSULIN"/>
    <property type="match status" value="1"/>
</dbReference>
<comment type="function">
    <text evidence="2">The insulin-like growth factors, isolated from plasma, are structurally and functionally related to insulin but have a much higher growth-promoting activity. Acts as a ligand for IGF1R. Binds to the alpha subunit of IGF1R, leading to the activation of the intrinsic tyrosine kinase activity which autophosphorylates tyrosine residues in the beta subunit thus initiatiating a cascade of down-stream signaling events leading to activation of the PI3K-AKT/PKB and the Ras-MAPK pathways. Binds to integrins. Its binding to integrins and subsequent ternary complex formation with integrins and IGFR1 are essential for IGF1 signaling.</text>
</comment>
<comment type="subcellular location">
    <subcellularLocation>
        <location>Secreted</location>
    </subcellularLocation>
</comment>
<comment type="similarity">
    <text evidence="5">Belongs to the insulin family.</text>
</comment>
<keyword id="KW-1015">Disulfide bond</keyword>
<keyword id="KW-0339">Growth factor</keyword>
<keyword id="KW-0964">Secreted</keyword>
<keyword id="KW-0732">Signal</keyword>
<sequence>MSSGHFFQWHLCDVFKSAMCCVSCTHTLSLLLCVLTLTSAATGAGPETLCGAELVDTLQFVCGERGFYFSKPTGYGPSSRRSHNRGIVDECCFQSCELRRLEMYCAPVKSGKAARSVRAQRHTDMPRTPKVSTAVQSVDRGTERRTAQHPDKTKPKKEVHQKNSSRGNTGGRNYRM</sequence>
<reference key="1">
    <citation type="journal article" date="1992" name="Proc. Natl. Acad. Sci. U.S.A.">
        <title>Identification of a second insulin-like growth factor in a fish species.</title>
        <authorList>
            <person name="Shamblott M.J."/>
            <person name="Chen T.T."/>
        </authorList>
    </citation>
    <scope>NUCLEOTIDE SEQUENCE [MRNA]</scope>
    <source>
        <tissue>Liver</tissue>
    </source>
</reference>
<feature type="signal peptide">
    <location>
        <begin position="1"/>
        <end status="unknown"/>
    </location>
</feature>
<feature type="propeptide" id="PRO_0000015705" evidence="1">
    <location>
        <begin status="unknown"/>
        <end position="44"/>
    </location>
</feature>
<feature type="chain" id="PRO_0000015706" description="Insulin-like growth factor 1">
    <location>
        <begin position="45"/>
        <end position="114"/>
    </location>
</feature>
<feature type="propeptide" id="PRO_0000015707" description="E peptide">
    <location>
        <begin position="115"/>
        <end position="176"/>
    </location>
</feature>
<feature type="region of interest" description="B">
    <location>
        <begin position="45"/>
        <end position="73"/>
    </location>
</feature>
<feature type="region of interest" description="C">
    <location>
        <begin position="74"/>
        <end position="85"/>
    </location>
</feature>
<feature type="region of interest" description="A">
    <location>
        <begin position="86"/>
        <end position="106"/>
    </location>
</feature>
<feature type="region of interest" description="D">
    <location>
        <begin position="107"/>
        <end position="114"/>
    </location>
</feature>
<feature type="region of interest" description="Disordered" evidence="3">
    <location>
        <begin position="115"/>
        <end position="176"/>
    </location>
</feature>
<feature type="compositionally biased region" description="Basic and acidic residues" evidence="3">
    <location>
        <begin position="140"/>
        <end position="161"/>
    </location>
</feature>
<feature type="disulfide bond" evidence="1">
    <location>
        <begin position="50"/>
        <end position="92"/>
    </location>
</feature>
<feature type="disulfide bond" evidence="1">
    <location>
        <begin position="62"/>
        <end position="105"/>
    </location>
</feature>
<feature type="disulfide bond" evidence="1">
    <location>
        <begin position="91"/>
        <end position="96"/>
    </location>
</feature>
<gene>
    <name evidence="2" type="primary">igf1</name>
    <name evidence="2" type="synonym">igf-1</name>
</gene>
<proteinExistence type="evidence at transcript level"/>
<organism>
    <name type="scientific">Oncorhynchus mykiss</name>
    <name type="common">Rainbow trout</name>
    <name type="synonym">Salmo gairdneri</name>
    <dbReference type="NCBI Taxonomy" id="8022"/>
    <lineage>
        <taxon>Eukaryota</taxon>
        <taxon>Metazoa</taxon>
        <taxon>Chordata</taxon>
        <taxon>Craniata</taxon>
        <taxon>Vertebrata</taxon>
        <taxon>Euteleostomi</taxon>
        <taxon>Actinopterygii</taxon>
        <taxon>Neopterygii</taxon>
        <taxon>Teleostei</taxon>
        <taxon>Protacanthopterygii</taxon>
        <taxon>Salmoniformes</taxon>
        <taxon>Salmonidae</taxon>
        <taxon>Salmoninae</taxon>
        <taxon>Oncorhynchus</taxon>
    </lineage>
</organism>
<protein>
    <recommendedName>
        <fullName evidence="2">Insulin-like growth factor 1</fullName>
    </recommendedName>
    <alternativeName>
        <fullName evidence="4">Insulin-like growth factor I</fullName>
        <shortName evidence="4">IGF-I</shortName>
    </alternativeName>
    <alternativeName>
        <fullName>Somatomedin</fullName>
    </alternativeName>
</protein>
<accession>Q02815</accession>
<name>IGF1_ONCMY</name>